<feature type="chain" id="PRO_0000133787" description="Large ribosomal subunit protein uL13">
    <location>
        <begin position="1"/>
        <end position="202"/>
    </location>
</feature>
<gene>
    <name type="primary">crp-46</name>
    <name type="synonym">rpl16</name>
    <name type="ORF">8D4.200</name>
    <name type="ORF">NCU01221</name>
</gene>
<sequence>MSSFESVVVIDGKGHLLGRLASIVAKQLLNGQKIVVVRCEALNISGEFFRAKLKYHSYLRKMTRYNPTRGGPFHFRAPSRIFYKAVRGMIPHKTARGAAALERLKVFEGVPPPYDKKKKMVVPQALRVLRLQPGRKFCTVGRLSSEVGWKYEDVVSRLEERRKAKGAAYYERKKVAARQLSEAKKSAKVNDKTAEALKEFGY</sequence>
<comment type="function">
    <text evidence="1">Component of the ribosome, a large ribonucleoprotein complex responsible for the synthesis of proteins in the cell. The small ribosomal subunit (SSU) binds messenger RNAs (mRNAs) and translates the encoded message by selecting cognate aminoacyl-transfer RNA (tRNA) molecules. The large subunit (LSU) contains the ribosomal catalytic site termed the peptidyl transferase center (PTC), which catalyzes the formation of peptide bonds, thereby polymerizing the amino acids delivered by tRNAs into a polypeptide chain. The nascent polypeptides leave the ribosome through a tunnel in the LSU and interact with protein factors that function in enzymatic processing, targeting, and the membrane insertion of nascent chains at the exit of the ribosomal tunnel.</text>
</comment>
<comment type="subunit">
    <text evidence="2">Component of the large ribosomal subunit (LSU). Mature N.crassa ribosomes consist of a small (40S) and a large (60S) subunit. The 40S small subunit contains 1 molecule of ribosomal RNA (18S rRNA) and at least 32 different proteins. The large 60S subunit contains 3 rRNA molecules (26S, 5.8S and 5S rRNA) and at least 42 different proteins.</text>
</comment>
<comment type="subcellular location">
    <subcellularLocation>
        <location evidence="1">Cytoplasm</location>
    </subcellularLocation>
</comment>
<comment type="similarity">
    <text evidence="2">Belongs to the universal ribosomal protein uL13 family.</text>
</comment>
<keyword id="KW-0963">Cytoplasm</keyword>
<keyword id="KW-1185">Reference proteome</keyword>
<keyword id="KW-0687">Ribonucleoprotein</keyword>
<keyword id="KW-0689">Ribosomal protein</keyword>
<reference key="1">
    <citation type="journal article" date="2003" name="Nucleic Acids Res.">
        <title>What's in the genome of a filamentous fungus? Analysis of the Neurospora genome sequence.</title>
        <authorList>
            <person name="Mannhaupt G."/>
            <person name="Montrone C."/>
            <person name="Haase D."/>
            <person name="Mewes H.-W."/>
            <person name="Aign V."/>
            <person name="Hoheisel J.D."/>
            <person name="Fartmann B."/>
            <person name="Nyakatura G."/>
            <person name="Kempken F."/>
            <person name="Maier J."/>
            <person name="Schulte U."/>
        </authorList>
    </citation>
    <scope>NUCLEOTIDE SEQUENCE [LARGE SCALE GENOMIC DNA]</scope>
    <source>
        <strain>ATCC 24698 / 74-OR23-1A / CBS 708.71 / DSM 1257 / FGSC 987</strain>
    </source>
</reference>
<reference key="2">
    <citation type="journal article" date="2003" name="Nature">
        <title>The genome sequence of the filamentous fungus Neurospora crassa.</title>
        <authorList>
            <person name="Galagan J.E."/>
            <person name="Calvo S.E."/>
            <person name="Borkovich K.A."/>
            <person name="Selker E.U."/>
            <person name="Read N.D."/>
            <person name="Jaffe D.B."/>
            <person name="FitzHugh W."/>
            <person name="Ma L.-J."/>
            <person name="Smirnov S."/>
            <person name="Purcell S."/>
            <person name="Rehman B."/>
            <person name="Elkins T."/>
            <person name="Engels R."/>
            <person name="Wang S."/>
            <person name="Nielsen C.B."/>
            <person name="Butler J."/>
            <person name="Endrizzi M."/>
            <person name="Qui D."/>
            <person name="Ianakiev P."/>
            <person name="Bell-Pedersen D."/>
            <person name="Nelson M.A."/>
            <person name="Werner-Washburne M."/>
            <person name="Selitrennikoff C.P."/>
            <person name="Kinsey J.A."/>
            <person name="Braun E.L."/>
            <person name="Zelter A."/>
            <person name="Schulte U."/>
            <person name="Kothe G.O."/>
            <person name="Jedd G."/>
            <person name="Mewes H.-W."/>
            <person name="Staben C."/>
            <person name="Marcotte E."/>
            <person name="Greenberg D."/>
            <person name="Roy A."/>
            <person name="Foley K."/>
            <person name="Naylor J."/>
            <person name="Stange-Thomann N."/>
            <person name="Barrett R."/>
            <person name="Gnerre S."/>
            <person name="Kamal M."/>
            <person name="Kamvysselis M."/>
            <person name="Mauceli E.W."/>
            <person name="Bielke C."/>
            <person name="Rudd S."/>
            <person name="Frishman D."/>
            <person name="Krystofova S."/>
            <person name="Rasmussen C."/>
            <person name="Metzenberg R.L."/>
            <person name="Perkins D.D."/>
            <person name="Kroken S."/>
            <person name="Cogoni C."/>
            <person name="Macino G."/>
            <person name="Catcheside D.E.A."/>
            <person name="Li W."/>
            <person name="Pratt R.J."/>
            <person name="Osmani S.A."/>
            <person name="DeSouza C.P.C."/>
            <person name="Glass N.L."/>
            <person name="Orbach M.J."/>
            <person name="Berglund J.A."/>
            <person name="Voelker R."/>
            <person name="Yarden O."/>
            <person name="Plamann M."/>
            <person name="Seiler S."/>
            <person name="Dunlap J.C."/>
            <person name="Radford A."/>
            <person name="Aramayo R."/>
            <person name="Natvig D.O."/>
            <person name="Alex L.A."/>
            <person name="Mannhaupt G."/>
            <person name="Ebbole D.J."/>
            <person name="Freitag M."/>
            <person name="Paulsen I."/>
            <person name="Sachs M.S."/>
            <person name="Lander E.S."/>
            <person name="Nusbaum C."/>
            <person name="Birren B.W."/>
        </authorList>
    </citation>
    <scope>NUCLEOTIDE SEQUENCE [LARGE SCALE GENOMIC DNA]</scope>
    <source>
        <strain>ATCC 24698 / 74-OR23-1A / CBS 708.71 / DSM 1257 / FGSC 987</strain>
    </source>
</reference>
<name>RL16_NEUCR</name>
<accession>Q9P720</accession>
<accession>Q7S7Z3</accession>
<accession>V5ILA7</accession>
<protein>
    <recommendedName>
        <fullName evidence="2">Large ribosomal subunit protein uL13</fullName>
    </recommendedName>
    <alternativeName>
        <fullName>60S ribosomal protein L16</fullName>
    </alternativeName>
    <alternativeName>
        <fullName>Cytoplasmic ribosomal protein 46</fullName>
    </alternativeName>
</protein>
<organism>
    <name type="scientific">Neurospora crassa (strain ATCC 24698 / 74-OR23-1A / CBS 708.71 / DSM 1257 / FGSC 987)</name>
    <dbReference type="NCBI Taxonomy" id="367110"/>
    <lineage>
        <taxon>Eukaryota</taxon>
        <taxon>Fungi</taxon>
        <taxon>Dikarya</taxon>
        <taxon>Ascomycota</taxon>
        <taxon>Pezizomycotina</taxon>
        <taxon>Sordariomycetes</taxon>
        <taxon>Sordariomycetidae</taxon>
        <taxon>Sordariales</taxon>
        <taxon>Sordariaceae</taxon>
        <taxon>Neurospora</taxon>
    </lineage>
</organism>
<proteinExistence type="inferred from homology"/>
<dbReference type="EMBL" id="AL353819">
    <property type="protein sequence ID" value="CAB88562.1"/>
    <property type="molecule type" value="Genomic_DNA"/>
</dbReference>
<dbReference type="EMBL" id="CM002240">
    <property type="protein sequence ID" value="ESA42523.1"/>
    <property type="molecule type" value="Genomic_DNA"/>
</dbReference>
<dbReference type="PIR" id="T48746">
    <property type="entry name" value="T48746"/>
</dbReference>
<dbReference type="RefSeq" id="XP_011394487.1">
    <property type="nucleotide sequence ID" value="XM_011396185.1"/>
</dbReference>
<dbReference type="SMR" id="Q9P720"/>
<dbReference type="FunCoup" id="Q9P720">
    <property type="interactions" value="943"/>
</dbReference>
<dbReference type="STRING" id="367110.Q9P720"/>
<dbReference type="PaxDb" id="5141-EFNCRP00000004263"/>
<dbReference type="EnsemblFungi" id="ESA42523">
    <property type="protein sequence ID" value="ESA42523"/>
    <property type="gene ID" value="NCU01221"/>
</dbReference>
<dbReference type="GeneID" id="3877719"/>
<dbReference type="KEGG" id="ncr:NCU01221"/>
<dbReference type="VEuPathDB" id="FungiDB:NCU01221"/>
<dbReference type="HOGENOM" id="CLU_076922_0_0_1"/>
<dbReference type="InParanoid" id="Q9P720"/>
<dbReference type="OMA" id="GMLPWKT"/>
<dbReference type="OrthoDB" id="1882297at2759"/>
<dbReference type="Proteomes" id="UP000001805">
    <property type="component" value="Chromosome 2, Linkage Group V"/>
</dbReference>
<dbReference type="GO" id="GO:0022625">
    <property type="term" value="C:cytosolic large ribosomal subunit"/>
    <property type="evidence" value="ECO:0000318"/>
    <property type="project" value="GO_Central"/>
</dbReference>
<dbReference type="GO" id="GO:0005840">
    <property type="term" value="C:ribosome"/>
    <property type="evidence" value="ECO:0000318"/>
    <property type="project" value="GO_Central"/>
</dbReference>
<dbReference type="GO" id="GO:0003729">
    <property type="term" value="F:mRNA binding"/>
    <property type="evidence" value="ECO:0000318"/>
    <property type="project" value="GO_Central"/>
</dbReference>
<dbReference type="GO" id="GO:0003735">
    <property type="term" value="F:structural constituent of ribosome"/>
    <property type="evidence" value="ECO:0000318"/>
    <property type="project" value="GO_Central"/>
</dbReference>
<dbReference type="GO" id="GO:0017148">
    <property type="term" value="P:negative regulation of translation"/>
    <property type="evidence" value="ECO:0000318"/>
    <property type="project" value="GO_Central"/>
</dbReference>
<dbReference type="GO" id="GO:0006412">
    <property type="term" value="P:translation"/>
    <property type="evidence" value="ECO:0007669"/>
    <property type="project" value="InterPro"/>
</dbReference>
<dbReference type="CDD" id="cd00392">
    <property type="entry name" value="Ribosomal_L13"/>
    <property type="match status" value="1"/>
</dbReference>
<dbReference type="FunFam" id="6.10.250.3250:FF:000001">
    <property type="entry name" value="60S ribosomal protein L13a"/>
    <property type="match status" value="1"/>
</dbReference>
<dbReference type="FunFam" id="3.90.1180.10:FF:000002">
    <property type="entry name" value="60S ribosomal protein L16"/>
    <property type="match status" value="1"/>
</dbReference>
<dbReference type="Gene3D" id="6.10.250.3250">
    <property type="match status" value="1"/>
</dbReference>
<dbReference type="Gene3D" id="3.90.1180.10">
    <property type="entry name" value="Ribosomal protein L13"/>
    <property type="match status" value="1"/>
</dbReference>
<dbReference type="HAMAP" id="MF_01366">
    <property type="entry name" value="Ribosomal_uL13"/>
    <property type="match status" value="1"/>
</dbReference>
<dbReference type="InterPro" id="IPR005822">
    <property type="entry name" value="Ribosomal_uL13"/>
</dbReference>
<dbReference type="InterPro" id="IPR023563">
    <property type="entry name" value="Ribosomal_uL13_CS"/>
</dbReference>
<dbReference type="InterPro" id="IPR005755">
    <property type="entry name" value="Ribosomal_uL13_euk/arc"/>
</dbReference>
<dbReference type="InterPro" id="IPR036899">
    <property type="entry name" value="Ribosomal_uL13_sf"/>
</dbReference>
<dbReference type="NCBIfam" id="TIGR01077">
    <property type="entry name" value="L13_A_E"/>
    <property type="match status" value="1"/>
</dbReference>
<dbReference type="PANTHER" id="PTHR11545:SF3">
    <property type="entry name" value="LARGE RIBOSOMAL SUBUNIT PROTEIN UL13"/>
    <property type="match status" value="1"/>
</dbReference>
<dbReference type="PANTHER" id="PTHR11545">
    <property type="entry name" value="RIBOSOMAL PROTEIN L13"/>
    <property type="match status" value="1"/>
</dbReference>
<dbReference type="Pfam" id="PF00572">
    <property type="entry name" value="Ribosomal_L13"/>
    <property type="match status" value="1"/>
</dbReference>
<dbReference type="SUPFAM" id="SSF52161">
    <property type="entry name" value="Ribosomal protein L13"/>
    <property type="match status" value="1"/>
</dbReference>
<dbReference type="PROSITE" id="PS00783">
    <property type="entry name" value="RIBOSOMAL_L13"/>
    <property type="match status" value="1"/>
</dbReference>
<evidence type="ECO:0000250" key="1">
    <source>
        <dbReference type="UniProtKB" id="P26784"/>
    </source>
</evidence>
<evidence type="ECO:0000305" key="2"/>